<sequence length="1394" mass="157838">MDNEEENHYVSRLRDVYSSCDTTGTGFLDQEELTQLCTKLGLEEQLPALLHILLGDDRLARVNFEEFKEGFVAVLSSGSGVEPSDEEGSSSESATSCAVPPKYMSGSKWYGRRSLPELGDSATATKYGSEQQAKGSVKPPLRRSASLESVESLKSDEDAESAKEPQNELFEAQGQLRSWGCEVFGTLRKSCSPSFSTPENLVQGIWHELGIGSSGHLNEQELAVVCRSIGLHSLEKQELEELFSKLDQDGDGRVSLAEFQLGLFGHEPPSLPASSSLIKPNRLWSHYQEESGCHTTTTSSLVSVCSGLRLFSSVDDGSGFAFPEQVISAWAQEGIQNGREILQSLDFSVDEKVNLLELTWALDNELLTVDGVIQQAALACYRQELSYHQGQVDQLVQERDKARQDLEKAEKRNLDFVREMDDCHSALEQLTEKKIKHLEQEYRGRLSLLRSEVEMERELFWEQARRQRAVLEQDVGRLQAEETSLREKLTLALKENSRLQKEIIEVVEKLSDSEKLVLRLQSDLQFVLKDKLEPQSMELLAQEEQFTAILNDYELKCRDLQDRNDELQAELEGLRLRLPRSRQSPAGTPGTHRRRIPGRGPADNLFVGESTPVSLETEIMVEQMKEHYQELRMQLETKVNYYEKEIEVMKRNFEKDKKEMEQAFQLEVSVLEGQKADLEALYAKSQEVILGLKEQLQDAAQSPEPAPAGLAHCCAQALCTLAQRLEVEMHLRHQDQLLQIRQEAEEELNQKLSWLEAQHAACCESLSLQHQCEKDQLLQTHLQRVKDLAAQLDLEKGRREEREQEVLAHCRRQQLKLQAVMSEEQARICRSFTLEKEKLEQTYREQVEGLVQEADVLRALLKNGTTVVSDQQERTPSSMSLGPDSRQQPTARQAVSPDGRTGAPAEWPGPEKAEGRDFPGQLCSIDAMPSPTPTLLSRRSSENLGVRDNHQRPLNAEEGAIPKEPEPSARTLTGQGQKLPLPVHPQMLEPSLGTTALDRKAASVGVQGQASEGPVGDGEGVQEAWLQFRGEATRMRPSLPCSELPNPQEATVMPAMSESEMKDVKIKLLQLEDVVRALEKADSRESYRAELQRLSEENLVLKSDLGKIQLELETSESKNEVQRQEIEVLKRDKEQACCDLEELSTQTQKYKDEMSQLNCRVLQLEGEPSGLHTQKEENHGAIQVLMKKLEEAGCREEQQGDQIQNLKIELERVNEECQYLRLSQAELTESLEESRSQLYSVQLRLEAAQSQHGRIVQRLQEQMSQLVPGARVAELQHLLNVKEEEARRLSAQQEEYRQQLKAREDQVEDAEARLRNVEWLLQEKVEELRKQFEKNTRSDLLLKELYVENAHLMKAVQLTEEKQRGAEKKNCVLEEKVRALNKLISKMAPASLSV</sequence>
<comment type="function">
    <text evidence="1 2">Involved in the microtubule organization in interphase cells. Overexpression induces the fragmentation of the Golgi, and causes lysosomes to disperse toward the cell periphery; it also interferes with mitotic spindle assembly (By similarity). Involved in vesicle transport in photoreceptor cells (By similarity).</text>
</comment>
<comment type="subunit">
    <text evidence="2">Interacts with gamma-tubulin and TUBGCP4. Interacts with anaphase promoting complex/cyclosome (APC/C). Interacts with CDC20 and FZR1. Interacts with LCA5 and USH2A (By similarity).</text>
</comment>
<comment type="subcellular location">
    <subcellularLocation>
        <location evidence="2">Cytoplasm</location>
        <location evidence="2">Cytoskeleton</location>
        <location evidence="2">Microtubule organizing center</location>
        <location evidence="2">Centrosome</location>
    </subcellularLocation>
    <subcellularLocation>
        <location evidence="2">Cytoplasm</location>
    </subcellularLocation>
    <text evidence="2">In interphase cells, NLP is transported to the centrosomes by the dynein-dynactin motor complex. During centrosome maturation, PLK1 directly phosphorylates NLP resulting in its release into the cytoplasm.</text>
</comment>
<comment type="alternative products">
    <event type="alternative splicing"/>
    <isoform>
        <id>Q6ZQ12-3</id>
        <name>3</name>
        <sequence type="displayed"/>
    </isoform>
    <isoform>
        <id>Q6ZQ12-1</id>
        <name>1</name>
        <sequence type="described" ref="VSP_037882"/>
    </isoform>
    <isoform>
        <id>Q6ZQ12-2</id>
        <name>2</name>
        <sequence type="described" ref="VSP_021526"/>
    </isoform>
</comment>
<comment type="domain">
    <text evidence="2">The KEN and D (destructive) boxes are required for the cell cycle-controlled NINL degradation by the APC/C pathway.</text>
</comment>
<comment type="PTM">
    <text evidence="2">Phosphorylated by PLK1 which disrupts its centrosome association and interaction with gamma-tubulin.</text>
</comment>
<comment type="PTM">
    <text evidence="2">Ubiquitinated by the APC/C complex leading to its degradation.</text>
</comment>
<comment type="sequence caution" evidence="8">
    <conflict type="erroneous initiation">
        <sequence resource="EMBL-CDS" id="BAC98063"/>
    </conflict>
</comment>
<organism>
    <name type="scientific">Mus musculus</name>
    <name type="common">Mouse</name>
    <dbReference type="NCBI Taxonomy" id="10090"/>
    <lineage>
        <taxon>Eukaryota</taxon>
        <taxon>Metazoa</taxon>
        <taxon>Chordata</taxon>
        <taxon>Craniata</taxon>
        <taxon>Vertebrata</taxon>
        <taxon>Euteleostomi</taxon>
        <taxon>Mammalia</taxon>
        <taxon>Eutheria</taxon>
        <taxon>Euarchontoglires</taxon>
        <taxon>Glires</taxon>
        <taxon>Rodentia</taxon>
        <taxon>Myomorpha</taxon>
        <taxon>Muroidea</taxon>
        <taxon>Muridae</taxon>
        <taxon>Murinae</taxon>
        <taxon>Mus</taxon>
        <taxon>Mus</taxon>
    </lineage>
</organism>
<dbReference type="EMBL" id="AK129253">
    <property type="protein sequence ID" value="BAC98063.1"/>
    <property type="status" value="ALT_INIT"/>
    <property type="molecule type" value="mRNA"/>
</dbReference>
<dbReference type="EMBL" id="AL808125">
    <property type="status" value="NOT_ANNOTATED_CDS"/>
    <property type="molecule type" value="Genomic_DNA"/>
</dbReference>
<dbReference type="EMBL" id="BC067071">
    <property type="protein sequence ID" value="AAH67071.1"/>
    <property type="molecule type" value="mRNA"/>
</dbReference>
<dbReference type="CCDS" id="CCDS50744.1">
    <molecule id="Q6ZQ12-3"/>
</dbReference>
<dbReference type="RefSeq" id="NP_997087.2">
    <molecule id="Q6ZQ12-3"/>
    <property type="nucleotide sequence ID" value="NM_207204.2"/>
</dbReference>
<dbReference type="SMR" id="Q6ZQ12"/>
<dbReference type="BioGRID" id="219219">
    <property type="interactions" value="4"/>
</dbReference>
<dbReference type="FunCoup" id="Q6ZQ12">
    <property type="interactions" value="279"/>
</dbReference>
<dbReference type="IntAct" id="Q6ZQ12">
    <property type="interactions" value="1"/>
</dbReference>
<dbReference type="STRING" id="10090.ENSMUSP00000105522"/>
<dbReference type="GlyGen" id="Q6ZQ12">
    <property type="glycosylation" value="2 sites"/>
</dbReference>
<dbReference type="iPTMnet" id="Q6ZQ12"/>
<dbReference type="PhosphoSitePlus" id="Q6ZQ12"/>
<dbReference type="jPOST" id="Q6ZQ12"/>
<dbReference type="PaxDb" id="10090-ENSMUSP00000105522"/>
<dbReference type="ProteomicsDB" id="253065">
    <molecule id="Q6ZQ12-3"/>
</dbReference>
<dbReference type="ProteomicsDB" id="253066">
    <molecule id="Q6ZQ12-1"/>
</dbReference>
<dbReference type="ProteomicsDB" id="253067">
    <molecule id="Q6ZQ12-2"/>
</dbReference>
<dbReference type="Antibodypedia" id="628">
    <property type="antibodies" value="53 antibodies from 16 providers"/>
</dbReference>
<dbReference type="DNASU" id="78177"/>
<dbReference type="Ensembl" id="ENSMUST00000109896.8">
    <molecule id="Q6ZQ12-3"/>
    <property type="protein sequence ID" value="ENSMUSP00000105522.2"/>
    <property type="gene ID" value="ENSMUSG00000068115.14"/>
</dbReference>
<dbReference type="GeneID" id="78177"/>
<dbReference type="KEGG" id="mmu:78177"/>
<dbReference type="UCSC" id="uc008mut.2">
    <molecule id="Q6ZQ12-3"/>
    <property type="organism name" value="mouse"/>
</dbReference>
<dbReference type="AGR" id="MGI:1925427"/>
<dbReference type="CTD" id="22981"/>
<dbReference type="MGI" id="MGI:1925427">
    <property type="gene designation" value="Ninl"/>
</dbReference>
<dbReference type="VEuPathDB" id="HostDB:ENSMUSG00000068115"/>
<dbReference type="eggNOG" id="ENOG502R2VA">
    <property type="taxonomic scope" value="Eukaryota"/>
</dbReference>
<dbReference type="GeneTree" id="ENSGT00660000095541"/>
<dbReference type="HOGENOM" id="CLU_001462_0_0_1"/>
<dbReference type="InParanoid" id="Q6ZQ12"/>
<dbReference type="OMA" id="SYHQGQV"/>
<dbReference type="OrthoDB" id="5799458at2759"/>
<dbReference type="PhylomeDB" id="Q6ZQ12"/>
<dbReference type="TreeFam" id="TF325139"/>
<dbReference type="Reactome" id="R-MMU-2565942">
    <property type="pathway name" value="Regulation of PLK1 Activity at G2/M Transition"/>
</dbReference>
<dbReference type="Reactome" id="R-MMU-380259">
    <property type="pathway name" value="Loss of Nlp from mitotic centrosomes"/>
</dbReference>
<dbReference type="Reactome" id="R-MMU-380270">
    <property type="pathway name" value="Recruitment of mitotic centrosome proteins and complexes"/>
</dbReference>
<dbReference type="Reactome" id="R-MMU-380284">
    <property type="pathway name" value="Loss of proteins required for interphase microtubule organization from the centrosome"/>
</dbReference>
<dbReference type="Reactome" id="R-MMU-380320">
    <property type="pathway name" value="Recruitment of NuMA to mitotic centrosomes"/>
</dbReference>
<dbReference type="Reactome" id="R-MMU-5620912">
    <property type="pathway name" value="Anchoring of the basal body to the plasma membrane"/>
</dbReference>
<dbReference type="Reactome" id="R-MMU-8854518">
    <property type="pathway name" value="AURKA Activation by TPX2"/>
</dbReference>
<dbReference type="BioGRID-ORCS" id="78177">
    <property type="hits" value="2 hits in 77 CRISPR screens"/>
</dbReference>
<dbReference type="CD-CODE" id="01CA17F3">
    <property type="entry name" value="Centrosome"/>
</dbReference>
<dbReference type="ChiTaRS" id="Ninl">
    <property type="organism name" value="mouse"/>
</dbReference>
<dbReference type="PRO" id="PR:Q6ZQ12"/>
<dbReference type="Proteomes" id="UP000000589">
    <property type="component" value="Chromosome 2"/>
</dbReference>
<dbReference type="RNAct" id="Q6ZQ12">
    <property type="molecule type" value="protein"/>
</dbReference>
<dbReference type="Bgee" id="ENSMUSG00000068115">
    <property type="expression patterns" value="Expressed in ear vesicle and 207 other cell types or tissues"/>
</dbReference>
<dbReference type="ExpressionAtlas" id="Q6ZQ12">
    <property type="expression patterns" value="baseline and differential"/>
</dbReference>
<dbReference type="GO" id="GO:0005813">
    <property type="term" value="C:centrosome"/>
    <property type="evidence" value="ECO:0007669"/>
    <property type="project" value="UniProtKB-SubCell"/>
</dbReference>
<dbReference type="GO" id="GO:0005737">
    <property type="term" value="C:cytoplasm"/>
    <property type="evidence" value="ECO:0007669"/>
    <property type="project" value="UniProtKB-SubCell"/>
</dbReference>
<dbReference type="GO" id="GO:0005874">
    <property type="term" value="C:microtubule"/>
    <property type="evidence" value="ECO:0007669"/>
    <property type="project" value="UniProtKB-KW"/>
</dbReference>
<dbReference type="GO" id="GO:0005509">
    <property type="term" value="F:calcium ion binding"/>
    <property type="evidence" value="ECO:0007669"/>
    <property type="project" value="InterPro"/>
</dbReference>
<dbReference type="CDD" id="cd00051">
    <property type="entry name" value="EFh"/>
    <property type="match status" value="1"/>
</dbReference>
<dbReference type="FunFam" id="1.10.238.10:FF:000094">
    <property type="entry name" value="ninein isoform X7"/>
    <property type="match status" value="1"/>
</dbReference>
<dbReference type="FunFam" id="1.10.238.10:FF:000209">
    <property type="entry name" value="Ninein like"/>
    <property type="match status" value="1"/>
</dbReference>
<dbReference type="Gene3D" id="1.10.238.10">
    <property type="entry name" value="EF-hand"/>
    <property type="match status" value="2"/>
</dbReference>
<dbReference type="InterPro" id="IPR011992">
    <property type="entry name" value="EF-hand-dom_pair"/>
</dbReference>
<dbReference type="InterPro" id="IPR018247">
    <property type="entry name" value="EF_Hand_1_Ca_BS"/>
</dbReference>
<dbReference type="InterPro" id="IPR002048">
    <property type="entry name" value="EF_hand_dom"/>
</dbReference>
<dbReference type="PANTHER" id="PTHR18905">
    <property type="entry name" value="NINEIN"/>
    <property type="match status" value="1"/>
</dbReference>
<dbReference type="PANTHER" id="PTHR18905:SF12">
    <property type="entry name" value="NINEIN-LIKE PROTEIN"/>
    <property type="match status" value="1"/>
</dbReference>
<dbReference type="Pfam" id="PF13499">
    <property type="entry name" value="EF-hand_7"/>
    <property type="match status" value="1"/>
</dbReference>
<dbReference type="SMART" id="SM00054">
    <property type="entry name" value="EFh"/>
    <property type="match status" value="3"/>
</dbReference>
<dbReference type="SUPFAM" id="SSF47473">
    <property type="entry name" value="EF-hand"/>
    <property type="match status" value="1"/>
</dbReference>
<dbReference type="PROSITE" id="PS00018">
    <property type="entry name" value="EF_HAND_1"/>
    <property type="match status" value="1"/>
</dbReference>
<dbReference type="PROSITE" id="PS50222">
    <property type="entry name" value="EF_HAND_2"/>
    <property type="match status" value="4"/>
</dbReference>
<feature type="chain" id="PRO_0000259715" description="Ninein-like protein">
    <location>
        <begin position="1"/>
        <end position="1394"/>
    </location>
</feature>
<feature type="domain" description="EF-hand 1" evidence="4">
    <location>
        <begin position="8"/>
        <end position="43"/>
    </location>
</feature>
<feature type="domain" description="EF-hand 2" evidence="4">
    <location>
        <begin position="42"/>
        <end position="77"/>
    </location>
</feature>
<feature type="domain" description="EF-hand 3" evidence="4">
    <location>
        <begin position="197"/>
        <end position="232"/>
    </location>
</feature>
<feature type="domain" description="EF-hand 4" evidence="4">
    <location>
        <begin position="234"/>
        <end position="269"/>
    </location>
</feature>
<feature type="region of interest" description="Disordered" evidence="5">
    <location>
        <begin position="77"/>
        <end position="99"/>
    </location>
</feature>
<feature type="region of interest" description="Disordered" evidence="5">
    <location>
        <begin position="126"/>
        <end position="166"/>
    </location>
</feature>
<feature type="region of interest" description="Disordered" evidence="5">
    <location>
        <begin position="578"/>
        <end position="602"/>
    </location>
</feature>
<feature type="region of interest" description="Disordered" evidence="5">
    <location>
        <begin position="866"/>
        <end position="977"/>
    </location>
</feature>
<feature type="coiled-coil region" evidence="3">
    <location>
        <begin position="382"/>
        <end position="423"/>
    </location>
</feature>
<feature type="coiled-coil region" evidence="3">
    <location>
        <begin position="461"/>
        <end position="515"/>
    </location>
</feature>
<feature type="coiled-coil region" evidence="3">
    <location>
        <begin position="544"/>
        <end position="584"/>
    </location>
</feature>
<feature type="coiled-coil region" evidence="3">
    <location>
        <begin position="835"/>
        <end position="863"/>
    </location>
</feature>
<feature type="coiled-coil region" evidence="3">
    <location>
        <begin position="1057"/>
        <end position="1229"/>
    </location>
</feature>
<feature type="coiled-coil region" evidence="3">
    <location>
        <begin position="1269"/>
        <end position="1331"/>
    </location>
</feature>
<feature type="short sequence motif" description="KEN box">
    <location>
        <begin position="494"/>
        <end position="496"/>
    </location>
</feature>
<feature type="short sequence motif" description="D-box">
    <location>
        <begin position="632"/>
        <end position="640"/>
    </location>
</feature>
<feature type="compositionally biased region" description="Basic and acidic residues" evidence="5">
    <location>
        <begin position="151"/>
        <end position="166"/>
    </location>
</feature>
<feature type="compositionally biased region" description="Polar residues" evidence="5">
    <location>
        <begin position="866"/>
        <end position="893"/>
    </location>
</feature>
<feature type="compositionally biased region" description="Basic and acidic residues" evidence="5">
    <location>
        <begin position="939"/>
        <end position="951"/>
    </location>
</feature>
<feature type="binding site" evidence="4">
    <location>
        <position position="247"/>
    </location>
    <ligand>
        <name>Ca(2+)</name>
        <dbReference type="ChEBI" id="CHEBI:29108"/>
    </ligand>
</feature>
<feature type="binding site" evidence="4">
    <location>
        <position position="249"/>
    </location>
    <ligand>
        <name>Ca(2+)</name>
        <dbReference type="ChEBI" id="CHEBI:29108"/>
    </ligand>
</feature>
<feature type="binding site" evidence="4">
    <location>
        <position position="251"/>
    </location>
    <ligand>
        <name>Ca(2+)</name>
        <dbReference type="ChEBI" id="CHEBI:29108"/>
    </ligand>
</feature>
<feature type="binding site" evidence="4">
    <location>
        <position position="253"/>
    </location>
    <ligand>
        <name>Ca(2+)</name>
        <dbReference type="ChEBI" id="CHEBI:29108"/>
    </ligand>
</feature>
<feature type="binding site" evidence="4">
    <location>
        <position position="258"/>
    </location>
    <ligand>
        <name>Ca(2+)</name>
        <dbReference type="ChEBI" id="CHEBI:29108"/>
    </ligand>
</feature>
<feature type="modified residue" description="Phosphoserine" evidence="9">
    <location>
        <position position="149"/>
    </location>
</feature>
<feature type="splice variant" id="VSP_037882" description="In isoform 1." evidence="6">
    <location>
        <begin position="586"/>
        <end position="703"/>
    </location>
</feature>
<feature type="splice variant" id="VSP_021526" description="In isoform 2." evidence="7">
    <location>
        <begin position="990"/>
        <end position="1197"/>
    </location>
</feature>
<feature type="sequence conflict" description="In Ref. 1; BAC98063." evidence="8" ref="1">
    <original>R</original>
    <variation>Q</variation>
    <location>
        <position position="177"/>
    </location>
</feature>
<feature type="sequence conflict" description="In Ref. 1; BAC98063." evidence="8" ref="1">
    <original>Q</original>
    <variation>R</variation>
    <location>
        <position position="742"/>
    </location>
</feature>
<feature type="sequence conflict" description="In Ref. 1; BAC98063." evidence="8" ref="1">
    <original>R</original>
    <variation>Q</variation>
    <location>
        <position position="798"/>
    </location>
</feature>
<feature type="sequence conflict" description="In Ref. 1; BAC98063." evidence="8" ref="1">
    <original>G</original>
    <variation>D</variation>
    <location>
        <position position="920"/>
    </location>
</feature>
<feature type="sequence conflict" description="In Ref. 1; BAC98063." evidence="8" ref="1">
    <original>L</original>
    <variation>P</variation>
    <location>
        <position position="979"/>
    </location>
</feature>
<feature type="sequence conflict" description="In Ref. 1; BAC98063." evidence="8" ref="1">
    <original>I</original>
    <variation>T</variation>
    <location>
        <position position="1066"/>
    </location>
</feature>
<feature type="sequence conflict" description="In Ref. 1; BAC98063." evidence="8" ref="1">
    <original>S</original>
    <variation>G</variation>
    <location>
        <position position="1236"/>
    </location>
</feature>
<feature type="sequence conflict" description="In Ref. 1; BAC98063." evidence="8" ref="1">
    <original>K</original>
    <variation>E</variation>
    <location>
        <position position="1330"/>
    </location>
</feature>
<name>NINL_MOUSE</name>
<accession>Q6ZQ12</accession>
<accession>A2ANB8</accession>
<accession>Q6NXH6</accession>
<gene>
    <name type="primary">Ninl</name>
    <name type="synonym">Kiaa0980</name>
    <name type="synonym">Nlp</name>
</gene>
<evidence type="ECO:0000250" key="1">
    <source>
        <dbReference type="UniProtKB" id="G9G127"/>
    </source>
</evidence>
<evidence type="ECO:0000250" key="2">
    <source>
        <dbReference type="UniProtKB" id="Q9Y2I6"/>
    </source>
</evidence>
<evidence type="ECO:0000255" key="3"/>
<evidence type="ECO:0000255" key="4">
    <source>
        <dbReference type="PROSITE-ProRule" id="PRU00448"/>
    </source>
</evidence>
<evidence type="ECO:0000256" key="5">
    <source>
        <dbReference type="SAM" id="MobiDB-lite"/>
    </source>
</evidence>
<evidence type="ECO:0000303" key="6">
    <source>
    </source>
</evidence>
<evidence type="ECO:0000303" key="7">
    <source>
    </source>
</evidence>
<evidence type="ECO:0000305" key="8"/>
<evidence type="ECO:0007744" key="9">
    <source>
    </source>
</evidence>
<keyword id="KW-0025">Alternative splicing</keyword>
<keyword id="KW-0106">Calcium</keyword>
<keyword id="KW-0175">Coiled coil</keyword>
<keyword id="KW-0963">Cytoplasm</keyword>
<keyword id="KW-0206">Cytoskeleton</keyword>
<keyword id="KW-0479">Metal-binding</keyword>
<keyword id="KW-0493">Microtubule</keyword>
<keyword id="KW-0597">Phosphoprotein</keyword>
<keyword id="KW-1185">Reference proteome</keyword>
<keyword id="KW-0677">Repeat</keyword>
<keyword id="KW-0832">Ubl conjugation</keyword>
<reference key="1">
    <citation type="journal article" date="2003" name="DNA Res.">
        <title>Prediction of the coding sequences of mouse homologues of KIAA gene: III. The complete nucleotide sequences of 500 mouse KIAA-homologous cDNAs identified by screening of terminal sequences of cDNA clones randomly sampled from size-fractionated libraries.</title>
        <authorList>
            <person name="Okazaki N."/>
            <person name="Kikuno R."/>
            <person name="Ohara R."/>
            <person name="Inamoto S."/>
            <person name="Koseki H."/>
            <person name="Hiraoka S."/>
            <person name="Saga Y."/>
            <person name="Nagase T."/>
            <person name="Ohara O."/>
            <person name="Koga H."/>
        </authorList>
    </citation>
    <scope>NUCLEOTIDE SEQUENCE [LARGE SCALE MRNA] (ISOFORM 1)</scope>
    <source>
        <tissue>Embryonic tail</tissue>
    </source>
</reference>
<reference key="2">
    <citation type="journal article" date="2009" name="PLoS Biol.">
        <title>Lineage-specific biology revealed by a finished genome assembly of the mouse.</title>
        <authorList>
            <person name="Church D.M."/>
            <person name="Goodstadt L."/>
            <person name="Hillier L.W."/>
            <person name="Zody M.C."/>
            <person name="Goldstein S."/>
            <person name="She X."/>
            <person name="Bult C.J."/>
            <person name="Agarwala R."/>
            <person name="Cherry J.L."/>
            <person name="DiCuccio M."/>
            <person name="Hlavina W."/>
            <person name="Kapustin Y."/>
            <person name="Meric P."/>
            <person name="Maglott D."/>
            <person name="Birtle Z."/>
            <person name="Marques A.C."/>
            <person name="Graves T."/>
            <person name="Zhou S."/>
            <person name="Teague B."/>
            <person name="Potamousis K."/>
            <person name="Churas C."/>
            <person name="Place M."/>
            <person name="Herschleb J."/>
            <person name="Runnheim R."/>
            <person name="Forrest D."/>
            <person name="Amos-Landgraf J."/>
            <person name="Schwartz D.C."/>
            <person name="Cheng Z."/>
            <person name="Lindblad-Toh K."/>
            <person name="Eichler E.E."/>
            <person name="Ponting C.P."/>
        </authorList>
    </citation>
    <scope>NUCLEOTIDE SEQUENCE [LARGE SCALE GENOMIC DNA]</scope>
    <source>
        <strain>C57BL/6J</strain>
    </source>
</reference>
<reference key="3">
    <citation type="journal article" date="2004" name="Genome Res.">
        <title>The status, quality, and expansion of the NIH full-length cDNA project: the Mammalian Gene Collection (MGC).</title>
        <authorList>
            <consortium name="The MGC Project Team"/>
        </authorList>
    </citation>
    <scope>NUCLEOTIDE SEQUENCE [LARGE SCALE MRNA] (ISOFORM 2)</scope>
    <source>
        <strain>C57BL/6J</strain>
        <tissue>Eye</tissue>
    </source>
</reference>
<reference key="4">
    <citation type="journal article" date="2010" name="Cell">
        <title>A tissue-specific atlas of mouse protein phosphorylation and expression.</title>
        <authorList>
            <person name="Huttlin E.L."/>
            <person name="Jedrychowski M.P."/>
            <person name="Elias J.E."/>
            <person name="Goswami T."/>
            <person name="Rad R."/>
            <person name="Beausoleil S.A."/>
            <person name="Villen J."/>
            <person name="Haas W."/>
            <person name="Sowa M.E."/>
            <person name="Gygi S.P."/>
        </authorList>
    </citation>
    <scope>PHOSPHORYLATION [LARGE SCALE ANALYSIS] AT SER-149</scope>
    <scope>IDENTIFICATION BY MASS SPECTROMETRY [LARGE SCALE ANALYSIS]</scope>
    <source>
        <tissue>Testis</tissue>
    </source>
</reference>
<proteinExistence type="evidence at protein level"/>
<protein>
    <recommendedName>
        <fullName>Ninein-like protein</fullName>
    </recommendedName>
</protein>